<organism>
    <name type="scientific">Shewanella loihica (strain ATCC BAA-1088 / PV-4)</name>
    <dbReference type="NCBI Taxonomy" id="323850"/>
    <lineage>
        <taxon>Bacteria</taxon>
        <taxon>Pseudomonadati</taxon>
        <taxon>Pseudomonadota</taxon>
        <taxon>Gammaproteobacteria</taxon>
        <taxon>Alteromonadales</taxon>
        <taxon>Shewanellaceae</taxon>
        <taxon>Shewanella</taxon>
    </lineage>
</organism>
<reference key="1">
    <citation type="submission" date="2007-03" db="EMBL/GenBank/DDBJ databases">
        <title>Complete sequence of Shewanella loihica PV-4.</title>
        <authorList>
            <consortium name="US DOE Joint Genome Institute"/>
            <person name="Copeland A."/>
            <person name="Lucas S."/>
            <person name="Lapidus A."/>
            <person name="Barry K."/>
            <person name="Detter J.C."/>
            <person name="Glavina del Rio T."/>
            <person name="Hammon N."/>
            <person name="Israni S."/>
            <person name="Dalin E."/>
            <person name="Tice H."/>
            <person name="Pitluck S."/>
            <person name="Chain P."/>
            <person name="Malfatti S."/>
            <person name="Shin M."/>
            <person name="Vergez L."/>
            <person name="Schmutz J."/>
            <person name="Larimer F."/>
            <person name="Land M."/>
            <person name="Hauser L."/>
            <person name="Kyrpides N."/>
            <person name="Mikhailova N."/>
            <person name="Romine M.F."/>
            <person name="Serres G."/>
            <person name="Fredrickson J."/>
            <person name="Tiedje J."/>
            <person name="Richardson P."/>
        </authorList>
    </citation>
    <scope>NUCLEOTIDE SEQUENCE [LARGE SCALE GENOMIC DNA]</scope>
    <source>
        <strain>ATCC BAA-1088 / PV-4</strain>
    </source>
</reference>
<protein>
    <recommendedName>
        <fullName evidence="1">Pantothenate kinase</fullName>
        <ecNumber evidence="1">2.7.1.33</ecNumber>
    </recommendedName>
    <alternativeName>
        <fullName evidence="1">Pantothenic acid kinase</fullName>
    </alternativeName>
</protein>
<evidence type="ECO:0000255" key="1">
    <source>
        <dbReference type="HAMAP-Rule" id="MF_00215"/>
    </source>
</evidence>
<gene>
    <name evidence="1" type="primary">coaA</name>
    <name type="ordered locus">Shew_0143</name>
</gene>
<feature type="chain" id="PRO_1000043251" description="Pantothenate kinase">
    <location>
        <begin position="1"/>
        <end position="316"/>
    </location>
</feature>
<feature type="binding site" evidence="1">
    <location>
        <begin position="95"/>
        <end position="102"/>
    </location>
    <ligand>
        <name>ATP</name>
        <dbReference type="ChEBI" id="CHEBI:30616"/>
    </ligand>
</feature>
<comment type="catalytic activity">
    <reaction evidence="1">
        <text>(R)-pantothenate + ATP = (R)-4'-phosphopantothenate + ADP + H(+)</text>
        <dbReference type="Rhea" id="RHEA:16373"/>
        <dbReference type="ChEBI" id="CHEBI:10986"/>
        <dbReference type="ChEBI" id="CHEBI:15378"/>
        <dbReference type="ChEBI" id="CHEBI:29032"/>
        <dbReference type="ChEBI" id="CHEBI:30616"/>
        <dbReference type="ChEBI" id="CHEBI:456216"/>
        <dbReference type="EC" id="2.7.1.33"/>
    </reaction>
</comment>
<comment type="pathway">
    <text evidence="1">Cofactor biosynthesis; coenzyme A biosynthesis; CoA from (R)-pantothenate: step 1/5.</text>
</comment>
<comment type="subcellular location">
    <subcellularLocation>
        <location evidence="1">Cytoplasm</location>
    </subcellularLocation>
</comment>
<comment type="similarity">
    <text evidence="1">Belongs to the prokaryotic pantothenate kinase family.</text>
</comment>
<accession>A3Q967</accession>
<sequence>MRANNQIHNALYLAFARQQWAELRKSVPLTLSESDLDDLRGINESISLDEVTDIYLPLSRLLNLIVGAKQQRGLVLNQFLGRVPPKRPYIISIAGSVAVGKSTTARILQALLRQWPEHPKVDLVTTDGFLYPLSELKRRGLLQRKGFPESYDMKLLVEFISKIKAGESLVHAPIYSHISYDRVADTQQAIEQPDILIIEGLNVLQTGQDTHVAIQQPFVSDFVDFSIYVDAEEPLLKEWYISRFLKFRTGAFSDPNSYFHHYSELTDDEATKIAANIWDSINGPNLNLNILPTRDRAHLILRKGTDHMMHQVLMRK</sequence>
<proteinExistence type="inferred from homology"/>
<dbReference type="EC" id="2.7.1.33" evidence="1"/>
<dbReference type="EMBL" id="CP000606">
    <property type="protein sequence ID" value="ABO22015.1"/>
    <property type="molecule type" value="Genomic_DNA"/>
</dbReference>
<dbReference type="RefSeq" id="WP_011863952.1">
    <property type="nucleotide sequence ID" value="NC_009092.1"/>
</dbReference>
<dbReference type="SMR" id="A3Q967"/>
<dbReference type="STRING" id="323850.Shew_0143"/>
<dbReference type="KEGG" id="slo:Shew_0143"/>
<dbReference type="eggNOG" id="COG1072">
    <property type="taxonomic scope" value="Bacteria"/>
</dbReference>
<dbReference type="HOGENOM" id="CLU_053818_1_1_6"/>
<dbReference type="OrthoDB" id="1550976at2"/>
<dbReference type="UniPathway" id="UPA00241">
    <property type="reaction ID" value="UER00352"/>
</dbReference>
<dbReference type="Proteomes" id="UP000001558">
    <property type="component" value="Chromosome"/>
</dbReference>
<dbReference type="GO" id="GO:0005737">
    <property type="term" value="C:cytoplasm"/>
    <property type="evidence" value="ECO:0007669"/>
    <property type="project" value="UniProtKB-SubCell"/>
</dbReference>
<dbReference type="GO" id="GO:0005524">
    <property type="term" value="F:ATP binding"/>
    <property type="evidence" value="ECO:0007669"/>
    <property type="project" value="UniProtKB-UniRule"/>
</dbReference>
<dbReference type="GO" id="GO:0004594">
    <property type="term" value="F:pantothenate kinase activity"/>
    <property type="evidence" value="ECO:0007669"/>
    <property type="project" value="UniProtKB-UniRule"/>
</dbReference>
<dbReference type="GO" id="GO:0015937">
    <property type="term" value="P:coenzyme A biosynthetic process"/>
    <property type="evidence" value="ECO:0007669"/>
    <property type="project" value="UniProtKB-UniRule"/>
</dbReference>
<dbReference type="CDD" id="cd02025">
    <property type="entry name" value="PanK"/>
    <property type="match status" value="1"/>
</dbReference>
<dbReference type="FunFam" id="3.40.50.300:FF:000242">
    <property type="entry name" value="Pantothenate kinase"/>
    <property type="match status" value="1"/>
</dbReference>
<dbReference type="Gene3D" id="3.40.50.300">
    <property type="entry name" value="P-loop containing nucleotide triphosphate hydrolases"/>
    <property type="match status" value="1"/>
</dbReference>
<dbReference type="HAMAP" id="MF_00215">
    <property type="entry name" value="Pantothen_kinase_1"/>
    <property type="match status" value="1"/>
</dbReference>
<dbReference type="InterPro" id="IPR027417">
    <property type="entry name" value="P-loop_NTPase"/>
</dbReference>
<dbReference type="InterPro" id="IPR004566">
    <property type="entry name" value="PanK"/>
</dbReference>
<dbReference type="InterPro" id="IPR006083">
    <property type="entry name" value="PRK/URK"/>
</dbReference>
<dbReference type="NCBIfam" id="TIGR00554">
    <property type="entry name" value="panK_bact"/>
    <property type="match status" value="1"/>
</dbReference>
<dbReference type="PANTHER" id="PTHR10285">
    <property type="entry name" value="URIDINE KINASE"/>
    <property type="match status" value="1"/>
</dbReference>
<dbReference type="Pfam" id="PF00485">
    <property type="entry name" value="PRK"/>
    <property type="match status" value="1"/>
</dbReference>
<dbReference type="PIRSF" id="PIRSF000545">
    <property type="entry name" value="Pantothenate_kin"/>
    <property type="match status" value="1"/>
</dbReference>
<dbReference type="SUPFAM" id="SSF52540">
    <property type="entry name" value="P-loop containing nucleoside triphosphate hydrolases"/>
    <property type="match status" value="1"/>
</dbReference>
<name>COAA_SHELP</name>
<keyword id="KW-0067">ATP-binding</keyword>
<keyword id="KW-0173">Coenzyme A biosynthesis</keyword>
<keyword id="KW-0963">Cytoplasm</keyword>
<keyword id="KW-0418">Kinase</keyword>
<keyword id="KW-0547">Nucleotide-binding</keyword>
<keyword id="KW-1185">Reference proteome</keyword>
<keyword id="KW-0808">Transferase</keyword>